<sequence>MLPVAALSGPFAPVLSATSRGVXXXXXXXXXXXXXATPEPPVLDPKRPILSRESLSGQAARRPLVASVGLNVPASVRYSHTDIKVPDFSDYRRSEVLDKTKSSRESSDARKGFSYLVTAATAVGVTYAAKSIVTQFVSSMSASADVLAMSKIEIKLSDIPEGKNMAFKWRGKPLFVRHRTQKEIEQEAAVELSQLRDPQHDLDRVKKPEWMILIGVCTHLGCVPIANAGDFGGYYCPCHGSHYDASGRIRKGPAPLNLEVPTYEFTGDDMVIVG</sequence>
<feature type="chain" id="PRO_0000307243" description="Cytochrome b-c1 complex subunit 9" evidence="5">
    <location>
        <begin position="1"/>
        <end position="78"/>
    </location>
</feature>
<feature type="chain" id="PRO_0000030666" description="Cytochrome b-c1 complex subunit Rieske, mitochondrial">
    <location>
        <begin position="79"/>
        <end position="274"/>
    </location>
</feature>
<feature type="topological domain" description="Mitochondrial matrix" evidence="2">
    <location>
        <begin position="79"/>
        <end position="103"/>
    </location>
</feature>
<feature type="transmembrane region" description="Helical" evidence="2">
    <location>
        <begin position="104"/>
        <end position="140"/>
    </location>
</feature>
<feature type="topological domain" description="Mitochondrial intermembrane" evidence="2">
    <location>
        <begin position="141"/>
        <end position="274"/>
    </location>
</feature>
<feature type="domain" description="Rieske" evidence="6">
    <location>
        <begin position="187"/>
        <end position="272"/>
    </location>
</feature>
<feature type="binding site" evidence="2">
    <location>
        <position position="217"/>
    </location>
    <ligand>
        <name>[2Fe-2S] cluster</name>
        <dbReference type="ChEBI" id="CHEBI:190135"/>
    </ligand>
</feature>
<feature type="binding site" evidence="2">
    <location>
        <position position="219"/>
    </location>
    <ligand>
        <name>[2Fe-2S] cluster</name>
        <dbReference type="ChEBI" id="CHEBI:190135"/>
    </ligand>
</feature>
<feature type="binding site" evidence="2">
    <location>
        <position position="236"/>
    </location>
    <ligand>
        <name>[2Fe-2S] cluster</name>
        <dbReference type="ChEBI" id="CHEBI:190135"/>
    </ligand>
</feature>
<feature type="binding site" evidence="2">
    <location>
        <position position="239"/>
    </location>
    <ligand>
        <name>[2Fe-2S] cluster</name>
        <dbReference type="ChEBI" id="CHEBI:190135"/>
    </ligand>
</feature>
<feature type="binding site" evidence="2">
    <location>
        <position position="241"/>
    </location>
    <ligand>
        <name>[2Fe-2S] cluster</name>
        <dbReference type="ChEBI" id="CHEBI:190135"/>
    </ligand>
</feature>
<feature type="disulfide bond" evidence="2">
    <location>
        <begin position="222"/>
        <end position="238"/>
    </location>
</feature>
<name>UCRI_LAGLA</name>
<keyword id="KW-0001">2Fe-2S</keyword>
<keyword id="KW-1015">Disulfide bond</keyword>
<keyword id="KW-0249">Electron transport</keyword>
<keyword id="KW-0408">Iron</keyword>
<keyword id="KW-0411">Iron-sulfur</keyword>
<keyword id="KW-0472">Membrane</keyword>
<keyword id="KW-0479">Metal-binding</keyword>
<keyword id="KW-0496">Mitochondrion</keyword>
<keyword id="KW-0999">Mitochondrion inner membrane</keyword>
<keyword id="KW-0679">Respiratory chain</keyword>
<keyword id="KW-0809">Transit peptide</keyword>
<keyword id="KW-1278">Translocase</keyword>
<keyword id="KW-0812">Transmembrane</keyword>
<keyword id="KW-1133">Transmembrane helix</keyword>
<keyword id="KW-0813">Transport</keyword>
<comment type="function">
    <molecule>Cytochrome b-c1 complex subunit Rieske, mitochondrial</molecule>
    <text evidence="1 3">Component of the ubiquinol-cytochrome c oxidoreductase, a multisubunit transmembrane complex that is part of the mitochondrial electron transport chain which drives oxidative phosphorylation. The respiratory chain contains 3 multisubunit complexes succinate dehydrogenase (complex II, CII), ubiquinol-cytochrome c oxidoreductase (cytochrome b-c1 complex, complex III, CIII) and cytochrome c oxidase (complex IV, CIV), that cooperate to transfer electrons derived from NADH and succinate to molecular oxygen, creating an electrochemical gradient over the inner membrane that drives transmembrane transport and the ATP synthase. The cytochrome b-c1 complex catalyzes electron transfer from ubiquinol to cytochrome c, linking this redox reaction to translocation of protons across the mitochondrial inner membrane, with protons being carried across the membrane as hydrogens on the quinol. In the process called Q cycle, 2 protons are consumed from the matrix, 4 protons are released into the intermembrane space and 2 electrons are passed to cytochrome c. The Rieske protein is a catalytic core subunit containing a [2Fe-2S] iron-sulfur cluster. It cycles between 2 conformational states during catalysis to transfer electrons from the quinol bound in the Q(0) site in cytochrome b to cytochrome c1 (By similarity). Incorporation of UQCRFS1 is the penultimate step in complex III assembly (By similarity).</text>
</comment>
<comment type="function">
    <molecule>Cytochrome b-c1 complex subunit 9</molecule>
    <text evidence="2 3 5">Component of the ubiquinol-cytochrome c oxidoreductase (cytochrome b-c1 complex, complex III, CIII). UQCRFS1 undergoes proteolytic processing once it is incorporated in the complex III dimer. One of the fragments, called subunit 9, corresponds to its mitochondrial targeting sequence (MTS) (By similarity). The proteolytic processing is necessary for the correct insertion of UQCRFS1 in the complex III dimer, but the persistence of UQCRFS1-derived fragments may prevent newly imported UQCRFS1 to be processed and assembled into complex III and is detrimental for the complex III structure and function (By similarity).</text>
</comment>
<comment type="catalytic activity">
    <reaction evidence="1">
        <text>a quinol + 2 Fe(III)-[cytochrome c](out) = a quinone + 2 Fe(II)-[cytochrome c](out) + 2 H(+)(out)</text>
        <dbReference type="Rhea" id="RHEA:11484"/>
        <dbReference type="Rhea" id="RHEA-COMP:10350"/>
        <dbReference type="Rhea" id="RHEA-COMP:14399"/>
        <dbReference type="ChEBI" id="CHEBI:15378"/>
        <dbReference type="ChEBI" id="CHEBI:24646"/>
        <dbReference type="ChEBI" id="CHEBI:29033"/>
        <dbReference type="ChEBI" id="CHEBI:29034"/>
        <dbReference type="ChEBI" id="CHEBI:132124"/>
        <dbReference type="EC" id="7.1.1.8"/>
    </reaction>
</comment>
<comment type="cofactor">
    <cofactor evidence="6">
        <name>[2Fe-2S] cluster</name>
        <dbReference type="ChEBI" id="CHEBI:190135"/>
    </cofactor>
    <text evidence="3 6">Binds 1 [2Fe-2S] cluster per subunit. Fe-S cluster delivery to the Rieske protein is mediated by components of the iron sulfur (Fe-S) cluster assembly machinery that reside in the mitochondrial matrix (including HSC20 and LYRM7) (By similarity).</text>
</comment>
<comment type="subunit">
    <molecule>Cytochrome b-c1 complex subunit Rieske, mitochondrial</molecule>
    <text evidence="2 3">Component of the ubiquinol-cytochrome c oxidoreductase (cytochrome b-c1 complex, complex III, CIII), a multisubunit enzyme composed of 11 subunits. The complex is composed of 3 respiratory subunits cytochrome b, cytochrome c1 and Rieske protein UQCRFS1, 2 core protein subunits UQCRC1/QCR1 and UQCRC2/QCR2, and 6 low-molecular weight protein subunits UQCRH/QCR6, UQCRB/QCR7, UQCRQ/QCR8, UQCR10/QCR9, UQCR11/QCR10 and subunit 9, the cleavage product of Rieske protein UQCRFS1. The complex exists as an obligatory dimer and forms supercomplexes (SCs) in the inner mitochondrial membrane with NADH-ubiquinone oxidoreductase (complex I, CI) and cytochrome c oxidase (complex IV, CIV), resulting in different assemblies (supercomplex SCI(1)III(2)IV(1) and megacomplex MCI(2)III(2)IV(2)) (By similarity). Incorporation of the Rieske protein UQCRFS1 is the penultimate step in complex III assembly. Interacts with TTC19, which is involved in the clearance of UQCRFS1 fragments (By similarity).</text>
</comment>
<comment type="subunit">
    <molecule>Cytochrome b-c1 complex subunit 9</molecule>
    <text evidence="2">Component of the ubiquinol-cytochrome c oxidoreductase (cytochrome b-c1 complex, complex III, CIII). Subunit 9 corresponds to the mitochondrial targeting sequence (MTS) of Rieske protein UQCRFS1. It is retained after processing and incorporated inside complex III, where it remains bound to the complex and localizes between the 2 core subunits UQCRC1/QCR1 and UQCRC2/QCR2.</text>
</comment>
<comment type="subcellular location">
    <subcellularLocation>
        <location evidence="4">Mitochondrion inner membrane</location>
        <topology evidence="4">Single-pass membrane protein</topology>
    </subcellularLocation>
</comment>
<comment type="PTM">
    <text evidence="5">Proteolytic processing is necessary for the correct insertion of UQCRFS1 in the complex III dimer. Several fragments are generated during UQCRFS1 insertion, most probably due to the endogenous matrix-processing peptidase (MPP) activity of the 2 core protein subunits UQCRC1/QCR1 and UQCRC2/QCR2, which are homologous to the 2 mitochondrial-processing peptidase (MPP) subunits beta-MPP and alpha-MPP respectively. The action of the protease is also necessary for the clearance of the UQCRFS1 fragments.</text>
</comment>
<comment type="miscellaneous">
    <text>The Rieske protein is a high potential 2Fe-2S protein.</text>
</comment>
<comment type="similarity">
    <text evidence="7">Belongs to the Rieske iron-sulfur protein family.</text>
</comment>
<comment type="caution">
    <text evidence="2 3">Several peptides are generated during UQCRFS1 insertion. According to some authors, the identification of the transit peptide as the subunit 9, does not necessary imply that it must be considered as a structural subunit of the complex III dimer as additional fragments from UQCRFS1 are also present.</text>
</comment>
<gene>
    <name type="primary">UQCRFS1</name>
</gene>
<protein>
    <recommendedName>
        <fullName>Cytochrome b-c1 complex subunit Rieske, mitochondrial</fullName>
        <ecNumber>7.1.1.8</ecNumber>
    </recommendedName>
    <alternativeName>
        <fullName>Complex III subunit 5</fullName>
    </alternativeName>
    <alternativeName>
        <fullName>Cytochrome b-c1 complex subunit 5</fullName>
    </alternativeName>
    <alternativeName>
        <fullName>Rieske iron-sulfur protein</fullName>
        <shortName>RISP</shortName>
    </alternativeName>
    <alternativeName>
        <fullName evidence="7">Rieske protein UQCRFS1</fullName>
    </alternativeName>
    <alternativeName>
        <fullName>Ubiquinol-cytochrome c reductase iron-sulfur subunit</fullName>
    </alternativeName>
    <component>
        <recommendedName>
            <fullName evidence="2">Cytochrome b-c1 complex subunit 9</fullName>
            <shortName evidence="2">Su9</shortName>
            <shortName evidence="2">Subunit 9</shortName>
        </recommendedName>
        <alternativeName>
            <fullName evidence="2">8 kDa subunit 9</fullName>
        </alternativeName>
        <alternativeName>
            <fullName>Complex III subunit IX</fullName>
        </alternativeName>
        <alternativeName>
            <fullName>Cytochrome b-c1 complex subunit 11</fullName>
        </alternativeName>
        <alternativeName>
            <fullName>UQCRFS1 mitochondrial targeting sequence</fullName>
            <shortName>UQCRFS1 MTS</shortName>
        </alternativeName>
        <alternativeName>
            <fullName evidence="2">Ubiquinol-cytochrome c reductase 8 kDa protein</fullName>
        </alternativeName>
    </component>
</protein>
<reference key="1">
    <citation type="submission" date="2003-09" db="EMBL/GenBank/DDBJ databases">
        <title>Molecular evolution of the iron sulfur protein and subunit 9 of complex III of the electron transport chain in primates.</title>
        <authorList>
            <person name="Doan J.W."/>
            <person name="Wildman D.E."/>
            <person name="Schmidt T.R."/>
            <person name="Weiss M.L."/>
            <person name="Goodman M."/>
            <person name="Grossman L.I."/>
        </authorList>
    </citation>
    <scope>NUCLEOTIDE SEQUENCE [GENOMIC DNA]</scope>
</reference>
<organism>
    <name type="scientific">Lagothrix lagotricha</name>
    <name type="common">Brown woolly monkey</name>
    <name type="synonym">Humboldt's woolly monkey</name>
    <dbReference type="NCBI Taxonomy" id="9519"/>
    <lineage>
        <taxon>Eukaryota</taxon>
        <taxon>Metazoa</taxon>
        <taxon>Chordata</taxon>
        <taxon>Craniata</taxon>
        <taxon>Vertebrata</taxon>
        <taxon>Euteleostomi</taxon>
        <taxon>Mammalia</taxon>
        <taxon>Eutheria</taxon>
        <taxon>Euarchontoglires</taxon>
        <taxon>Primates</taxon>
        <taxon>Haplorrhini</taxon>
        <taxon>Platyrrhini</taxon>
        <taxon>Atelidae</taxon>
        <taxon>Atelinae</taxon>
        <taxon>Lagothrix</taxon>
    </lineage>
</organism>
<dbReference type="EC" id="7.1.1.8"/>
<dbReference type="EMBL" id="AY387512">
    <property type="protein sequence ID" value="AAR32731.1"/>
    <property type="molecule type" value="Genomic_DNA"/>
</dbReference>
<dbReference type="EMBL" id="AY387511">
    <property type="protein sequence ID" value="AAR32731.1"/>
    <property type="status" value="JOINED"/>
    <property type="molecule type" value="Genomic_DNA"/>
</dbReference>
<dbReference type="GO" id="GO:0005743">
    <property type="term" value="C:mitochondrial inner membrane"/>
    <property type="evidence" value="ECO:0007669"/>
    <property type="project" value="UniProtKB-SubCell"/>
</dbReference>
<dbReference type="GO" id="GO:0005739">
    <property type="term" value="C:mitochondrion"/>
    <property type="evidence" value="ECO:0000250"/>
    <property type="project" value="UniProtKB"/>
</dbReference>
<dbReference type="GO" id="GO:0051537">
    <property type="term" value="F:2 iron, 2 sulfur cluster binding"/>
    <property type="evidence" value="ECO:0007669"/>
    <property type="project" value="UniProtKB-KW"/>
</dbReference>
<dbReference type="GO" id="GO:0046872">
    <property type="term" value="F:metal ion binding"/>
    <property type="evidence" value="ECO:0007669"/>
    <property type="project" value="UniProtKB-KW"/>
</dbReference>
<dbReference type="GO" id="GO:0008121">
    <property type="term" value="F:ubiquinol-cytochrome-c reductase activity"/>
    <property type="evidence" value="ECO:0007669"/>
    <property type="project" value="UniProtKB-EC"/>
</dbReference>
<dbReference type="GO" id="GO:0022904">
    <property type="term" value="P:respiratory electron transport chain"/>
    <property type="evidence" value="ECO:0000250"/>
    <property type="project" value="UniProtKB"/>
</dbReference>
<dbReference type="CDD" id="cd03470">
    <property type="entry name" value="Rieske_cytochrome_bc1"/>
    <property type="match status" value="1"/>
</dbReference>
<dbReference type="FunFam" id="1.20.5.270:FF:000001">
    <property type="entry name" value="Cytochrome b-c1 complex subunit Rieske, mitochondrial"/>
    <property type="match status" value="1"/>
</dbReference>
<dbReference type="FunFam" id="2.10.210.10:FF:000001">
    <property type="entry name" value="Cytochrome b-c1 complex subunit Rieske, mitochondrial"/>
    <property type="match status" value="1"/>
</dbReference>
<dbReference type="FunFam" id="2.102.10.10:FF:000001">
    <property type="entry name" value="Cytochrome b-c1 complex subunit Rieske, mitochondrial"/>
    <property type="match status" value="1"/>
</dbReference>
<dbReference type="Gene3D" id="2.10.210.10">
    <property type="entry name" value="Cytochrome Bc1 Complex, Chain I"/>
    <property type="match status" value="1"/>
</dbReference>
<dbReference type="Gene3D" id="2.102.10.10">
    <property type="entry name" value="Rieske [2Fe-2S] iron-sulphur domain"/>
    <property type="match status" value="1"/>
</dbReference>
<dbReference type="Gene3D" id="1.20.5.270">
    <property type="entry name" value="Ubiquinol cytochrome reductase, transmembrane domain"/>
    <property type="match status" value="1"/>
</dbReference>
<dbReference type="InterPro" id="IPR037008">
    <property type="entry name" value="bc1_Rieske_TM_sf"/>
</dbReference>
<dbReference type="InterPro" id="IPR011070">
    <property type="entry name" value="Globular_prot_asu/bsu"/>
</dbReference>
<dbReference type="InterPro" id="IPR017941">
    <property type="entry name" value="Rieske_2Fe-2S"/>
</dbReference>
<dbReference type="InterPro" id="IPR036922">
    <property type="entry name" value="Rieske_2Fe-2S_sf"/>
</dbReference>
<dbReference type="InterPro" id="IPR014349">
    <property type="entry name" value="Rieske_Fe-S_prot"/>
</dbReference>
<dbReference type="InterPro" id="IPR005805">
    <property type="entry name" value="Rieske_Fe-S_prot_C"/>
</dbReference>
<dbReference type="InterPro" id="IPR004192">
    <property type="entry name" value="Rieske_TM"/>
</dbReference>
<dbReference type="InterPro" id="IPR006317">
    <property type="entry name" value="Ubiquinol_cyt_c_Rdtase_Fe-S-su"/>
</dbReference>
<dbReference type="InterPro" id="IPR015248">
    <property type="entry name" value="UQCRFS1_N"/>
</dbReference>
<dbReference type="NCBIfam" id="TIGR01416">
    <property type="entry name" value="Rieske_proteo"/>
    <property type="match status" value="1"/>
</dbReference>
<dbReference type="PANTHER" id="PTHR10134">
    <property type="entry name" value="CYTOCHROME B-C1 COMPLEX SUBUNIT RIESKE, MITOCHONDRIAL"/>
    <property type="match status" value="1"/>
</dbReference>
<dbReference type="Pfam" id="PF00355">
    <property type="entry name" value="Rieske"/>
    <property type="match status" value="1"/>
</dbReference>
<dbReference type="Pfam" id="PF09165">
    <property type="entry name" value="Ubiq-Cytc-red_N"/>
    <property type="match status" value="1"/>
</dbReference>
<dbReference type="Pfam" id="PF02921">
    <property type="entry name" value="UCR_TM"/>
    <property type="match status" value="1"/>
</dbReference>
<dbReference type="PRINTS" id="PR00162">
    <property type="entry name" value="RIESKE"/>
</dbReference>
<dbReference type="SUPFAM" id="SSF50022">
    <property type="entry name" value="ISP domain"/>
    <property type="match status" value="1"/>
</dbReference>
<dbReference type="SUPFAM" id="SSF81502">
    <property type="entry name" value="ISP transmembrane anchor"/>
    <property type="match status" value="1"/>
</dbReference>
<dbReference type="SUPFAM" id="SSF56568">
    <property type="entry name" value="Non-globular alpha+beta subunits of globular proteins"/>
    <property type="match status" value="1"/>
</dbReference>
<dbReference type="PROSITE" id="PS51296">
    <property type="entry name" value="RIESKE"/>
    <property type="match status" value="1"/>
</dbReference>
<evidence type="ECO:0000250" key="1">
    <source>
        <dbReference type="UniProtKB" id="P08067"/>
    </source>
</evidence>
<evidence type="ECO:0000250" key="2">
    <source>
        <dbReference type="UniProtKB" id="P13272"/>
    </source>
</evidence>
<evidence type="ECO:0000250" key="3">
    <source>
        <dbReference type="UniProtKB" id="P47985"/>
    </source>
</evidence>
<evidence type="ECO:0000250" key="4">
    <source>
        <dbReference type="UniProtKB" id="Q5ZLR5"/>
    </source>
</evidence>
<evidence type="ECO:0000250" key="5">
    <source>
        <dbReference type="UniProtKB" id="Q9CR68"/>
    </source>
</evidence>
<evidence type="ECO:0000255" key="6">
    <source>
        <dbReference type="PROSITE-ProRule" id="PRU00628"/>
    </source>
</evidence>
<evidence type="ECO:0000305" key="7"/>
<proteinExistence type="inferred from homology"/>
<accession>Q69BJ8</accession>